<feature type="chain" id="PRO_0000069060" description="Alpha-1A adrenergic receptor">
    <location>
        <begin position="1"/>
        <end position="466"/>
    </location>
</feature>
<feature type="topological domain" description="Extracellular" evidence="1">
    <location>
        <begin position="1"/>
        <end position="27"/>
    </location>
</feature>
<feature type="transmembrane region" description="Helical; Name=1" evidence="1">
    <location>
        <begin position="28"/>
        <end position="51"/>
    </location>
</feature>
<feature type="topological domain" description="Cytoplasmic" evidence="1">
    <location>
        <begin position="52"/>
        <end position="64"/>
    </location>
</feature>
<feature type="transmembrane region" description="Helical; Name=2" evidence="1">
    <location>
        <begin position="65"/>
        <end position="88"/>
    </location>
</feature>
<feature type="topological domain" description="Extracellular" evidence="1">
    <location>
        <begin position="89"/>
        <end position="99"/>
    </location>
</feature>
<feature type="transmembrane region" description="Helical; Name=3" evidence="1">
    <location>
        <begin position="100"/>
        <end position="122"/>
    </location>
</feature>
<feature type="topological domain" description="Cytoplasmic" evidence="1">
    <location>
        <begin position="123"/>
        <end position="143"/>
    </location>
</feature>
<feature type="transmembrane region" description="Helical; Name=4" evidence="1">
    <location>
        <begin position="144"/>
        <end position="167"/>
    </location>
</feature>
<feature type="topological domain" description="Extracellular" evidence="1">
    <location>
        <begin position="168"/>
        <end position="181"/>
    </location>
</feature>
<feature type="transmembrane region" description="Helical; Name=5" evidence="1">
    <location>
        <begin position="182"/>
        <end position="205"/>
    </location>
</feature>
<feature type="topological domain" description="Cytoplasmic" evidence="1">
    <location>
        <begin position="206"/>
        <end position="273"/>
    </location>
</feature>
<feature type="transmembrane region" description="Helical; Name=6" evidence="1">
    <location>
        <begin position="274"/>
        <end position="297"/>
    </location>
</feature>
<feature type="topological domain" description="Extracellular" evidence="1">
    <location>
        <begin position="298"/>
        <end position="305"/>
    </location>
</feature>
<feature type="transmembrane region" description="Helical; Name=7" evidence="1">
    <location>
        <begin position="306"/>
        <end position="329"/>
    </location>
</feature>
<feature type="topological domain" description="Cytoplasmic" evidence="1">
    <location>
        <begin position="330"/>
        <end position="466"/>
    </location>
</feature>
<feature type="short sequence motif" description="Nuclear localization signal" evidence="1">
    <location>
        <begin position="334"/>
        <end position="349"/>
    </location>
</feature>
<feature type="modified residue" description="Phosphoserine; by PKA" evidence="3">
    <location>
        <position position="215"/>
    </location>
</feature>
<feature type="lipid moiety-binding region" description="S-palmitoyl cysteine" evidence="3">
    <location>
        <position position="345"/>
    </location>
</feature>
<feature type="glycosylation site" description="N-linked (GlcNAc...) asparagine" evidence="3">
    <location>
        <position position="7"/>
    </location>
</feature>
<feature type="glycosylation site" description="N-linked (GlcNAc...) asparagine" evidence="3">
    <location>
        <position position="13"/>
    </location>
</feature>
<feature type="glycosylation site" description="N-linked (GlcNAc...) asparagine" evidence="3">
    <location>
        <position position="22"/>
    </location>
</feature>
<feature type="disulfide bond" evidence="4">
    <location>
        <begin position="99"/>
        <end position="176"/>
    </location>
</feature>
<organism>
    <name type="scientific">Bos taurus</name>
    <name type="common">Bovine</name>
    <dbReference type="NCBI Taxonomy" id="9913"/>
    <lineage>
        <taxon>Eukaryota</taxon>
        <taxon>Metazoa</taxon>
        <taxon>Chordata</taxon>
        <taxon>Craniata</taxon>
        <taxon>Vertebrata</taxon>
        <taxon>Euteleostomi</taxon>
        <taxon>Mammalia</taxon>
        <taxon>Eutheria</taxon>
        <taxon>Laurasiatheria</taxon>
        <taxon>Artiodactyla</taxon>
        <taxon>Ruminantia</taxon>
        <taxon>Pecora</taxon>
        <taxon>Bovidae</taxon>
        <taxon>Bovinae</taxon>
        <taxon>Bos</taxon>
    </lineage>
</organism>
<reference key="1">
    <citation type="journal article" date="1990" name="J. Biol. Chem.">
        <title>Molecular cloning and expression of the cDNA for a novel alpha 1-adrenergic receptor subtype.</title>
        <authorList>
            <person name="Schwinn D.A."/>
            <person name="Lomasney J.W."/>
            <person name="Lorenz W."/>
            <person name="Szklut P.J."/>
            <person name="Fremeau R.T. Jr."/>
            <person name="Yang-Feng T.L."/>
            <person name="Caron M.G."/>
            <person name="Lefkowitz R.J."/>
            <person name="Cotecchia S."/>
        </authorList>
    </citation>
    <scope>NUCLEOTIDE SEQUENCE [MRNA]</scope>
    <source>
        <tissue>Brain</tissue>
    </source>
</reference>
<reference key="2">
    <citation type="journal article" date="1990" name="Trans. Assoc. Am. Physicians">
        <title>The alpha 1C-adrenergic receptor: a new member in the alpha 1-adrenergic receptor family.</title>
        <authorList>
            <person name="Schwinn D.A."/>
            <person name="Cotecchia S."/>
            <person name="Lorenz W."/>
            <person name="Caron M.G."/>
            <person name="Lefkowitz R.J."/>
        </authorList>
    </citation>
    <scope>NUCLEOTIDE SEQUENCE [MRNA]</scope>
</reference>
<evidence type="ECO:0000250" key="1"/>
<evidence type="ECO:0000250" key="2">
    <source>
        <dbReference type="UniProtKB" id="P35348"/>
    </source>
</evidence>
<evidence type="ECO:0000255" key="3"/>
<evidence type="ECO:0000255" key="4">
    <source>
        <dbReference type="PROSITE-ProRule" id="PRU00521"/>
    </source>
</evidence>
<accession>P18130</accession>
<protein>
    <recommendedName>
        <fullName>Alpha-1A adrenergic receptor</fullName>
    </recommendedName>
    <alternativeName>
        <fullName>Alpha-1A adrenoreceptor</fullName>
        <shortName>Alpha-1A adrenoceptor</shortName>
    </alternativeName>
    <alternativeName>
        <fullName>Alpha-1C adrenergic receptor</fullName>
    </alternativeName>
</protein>
<keyword id="KW-1003">Cell membrane</keyword>
<keyword id="KW-0963">Cytoplasm</keyword>
<keyword id="KW-1015">Disulfide bond</keyword>
<keyword id="KW-0297">G-protein coupled receptor</keyword>
<keyword id="KW-0325">Glycoprotein</keyword>
<keyword id="KW-0449">Lipoprotein</keyword>
<keyword id="KW-0472">Membrane</keyword>
<keyword id="KW-0539">Nucleus</keyword>
<keyword id="KW-0564">Palmitate</keyword>
<keyword id="KW-0597">Phosphoprotein</keyword>
<keyword id="KW-0675">Receptor</keyword>
<keyword id="KW-1185">Reference proteome</keyword>
<keyword id="KW-0807">Transducer</keyword>
<keyword id="KW-0812">Transmembrane</keyword>
<keyword id="KW-1133">Transmembrane helix</keyword>
<dbReference type="EMBL" id="J05426">
    <property type="protein sequence ID" value="AAA30374.1"/>
    <property type="molecule type" value="mRNA"/>
</dbReference>
<dbReference type="PIR" id="A35375">
    <property type="entry name" value="A35375"/>
</dbReference>
<dbReference type="RefSeq" id="NP_776923.1">
    <property type="nucleotide sequence ID" value="NM_174498.2"/>
</dbReference>
<dbReference type="SMR" id="P18130"/>
<dbReference type="FunCoup" id="P18130">
    <property type="interactions" value="563"/>
</dbReference>
<dbReference type="STRING" id="9913.ENSBTAP00000067347"/>
<dbReference type="BindingDB" id="P18130"/>
<dbReference type="ChEMBL" id="CHEMBL4892"/>
<dbReference type="DrugCentral" id="P18130"/>
<dbReference type="GlyCosmos" id="P18130">
    <property type="glycosylation" value="3 sites, No reported glycans"/>
</dbReference>
<dbReference type="GlyGen" id="P18130">
    <property type="glycosylation" value="3 sites"/>
</dbReference>
<dbReference type="PaxDb" id="9913-ENSBTAP00000042306"/>
<dbReference type="GeneID" id="282134"/>
<dbReference type="KEGG" id="bta:282134"/>
<dbReference type="CTD" id="148"/>
<dbReference type="eggNOG" id="KOG3656">
    <property type="taxonomic scope" value="Eukaryota"/>
</dbReference>
<dbReference type="InParanoid" id="P18130"/>
<dbReference type="OrthoDB" id="6358729at2759"/>
<dbReference type="PRO" id="PR:P18130"/>
<dbReference type="Proteomes" id="UP000009136">
    <property type="component" value="Unplaced"/>
</dbReference>
<dbReference type="GO" id="GO:0005901">
    <property type="term" value="C:caveola"/>
    <property type="evidence" value="ECO:0007669"/>
    <property type="project" value="UniProtKB-SubCell"/>
</dbReference>
<dbReference type="GO" id="GO:0005737">
    <property type="term" value="C:cytoplasm"/>
    <property type="evidence" value="ECO:0000250"/>
    <property type="project" value="UniProtKB"/>
</dbReference>
<dbReference type="GO" id="GO:0031965">
    <property type="term" value="C:nuclear membrane"/>
    <property type="evidence" value="ECO:0000250"/>
    <property type="project" value="UniProtKB"/>
</dbReference>
<dbReference type="GO" id="GO:0005634">
    <property type="term" value="C:nucleus"/>
    <property type="evidence" value="ECO:0000250"/>
    <property type="project" value="UniProtKB"/>
</dbReference>
<dbReference type="GO" id="GO:0005886">
    <property type="term" value="C:plasma membrane"/>
    <property type="evidence" value="ECO:0000250"/>
    <property type="project" value="UniProtKB"/>
</dbReference>
<dbReference type="GO" id="GO:0004937">
    <property type="term" value="F:alpha1-adrenergic receptor activity"/>
    <property type="evidence" value="ECO:0000318"/>
    <property type="project" value="GO_Central"/>
</dbReference>
<dbReference type="GO" id="GO:0046982">
    <property type="term" value="F:protein heterodimerization activity"/>
    <property type="evidence" value="ECO:0000250"/>
    <property type="project" value="UniProtKB"/>
</dbReference>
<dbReference type="GO" id="GO:0071880">
    <property type="term" value="P:adenylate cyclase-activating adrenergic receptor signaling pathway"/>
    <property type="evidence" value="ECO:0000318"/>
    <property type="project" value="GO_Central"/>
</dbReference>
<dbReference type="GO" id="GO:0007267">
    <property type="term" value="P:cell-cell signaling"/>
    <property type="evidence" value="ECO:0000318"/>
    <property type="project" value="GO_Central"/>
</dbReference>
<dbReference type="GO" id="GO:0007200">
    <property type="term" value="P:phospholipase C-activating G protein-coupled receptor signaling pathway"/>
    <property type="evidence" value="ECO:0000318"/>
    <property type="project" value="GO_Central"/>
</dbReference>
<dbReference type="GO" id="GO:0007204">
    <property type="term" value="P:positive regulation of cytosolic calcium ion concentration"/>
    <property type="evidence" value="ECO:0000318"/>
    <property type="project" value="GO_Central"/>
</dbReference>
<dbReference type="GO" id="GO:0043410">
    <property type="term" value="P:positive regulation of MAPK cascade"/>
    <property type="evidence" value="ECO:0000250"/>
    <property type="project" value="UniProtKB"/>
</dbReference>
<dbReference type="GO" id="GO:0055117">
    <property type="term" value="P:regulation of cardiac muscle contraction"/>
    <property type="evidence" value="ECO:0007669"/>
    <property type="project" value="InterPro"/>
</dbReference>
<dbReference type="GO" id="GO:0019229">
    <property type="term" value="P:regulation of vasoconstriction"/>
    <property type="evidence" value="ECO:0007669"/>
    <property type="project" value="InterPro"/>
</dbReference>
<dbReference type="CDD" id="cd15325">
    <property type="entry name" value="7tmA_alpha1A_AR"/>
    <property type="match status" value="1"/>
</dbReference>
<dbReference type="FunFam" id="1.20.1070.10:FF:000027">
    <property type="entry name" value="alpha-1A adrenergic receptor"/>
    <property type="match status" value="1"/>
</dbReference>
<dbReference type="Gene3D" id="1.20.1070.10">
    <property type="entry name" value="Rhodopsin 7-helix transmembrane proteins"/>
    <property type="match status" value="1"/>
</dbReference>
<dbReference type="InterPro" id="IPR002233">
    <property type="entry name" value="ADR_fam"/>
</dbReference>
<dbReference type="InterPro" id="IPR001004">
    <property type="entry name" value="ADRA1A_rcpt"/>
</dbReference>
<dbReference type="InterPro" id="IPR000276">
    <property type="entry name" value="GPCR_Rhodpsn"/>
</dbReference>
<dbReference type="InterPro" id="IPR017452">
    <property type="entry name" value="GPCR_Rhodpsn_7TM"/>
</dbReference>
<dbReference type="PANTHER" id="PTHR24248">
    <property type="entry name" value="ADRENERGIC RECEPTOR-RELATED G-PROTEIN COUPLED RECEPTOR"/>
    <property type="match status" value="1"/>
</dbReference>
<dbReference type="PANTHER" id="PTHR24248:SF16">
    <property type="entry name" value="ALPHA-1A ADRENERGIC RECEPTOR"/>
    <property type="match status" value="1"/>
</dbReference>
<dbReference type="Pfam" id="PF00001">
    <property type="entry name" value="7tm_1"/>
    <property type="match status" value="1"/>
</dbReference>
<dbReference type="PRINTS" id="PR01103">
    <property type="entry name" value="ADRENERGICR"/>
</dbReference>
<dbReference type="PRINTS" id="PR00557">
    <property type="entry name" value="ADRENRGCA1AR"/>
</dbReference>
<dbReference type="PRINTS" id="PR00237">
    <property type="entry name" value="GPCRRHODOPSN"/>
</dbReference>
<dbReference type="SMART" id="SM01381">
    <property type="entry name" value="7TM_GPCR_Srsx"/>
    <property type="match status" value="1"/>
</dbReference>
<dbReference type="SUPFAM" id="SSF81321">
    <property type="entry name" value="Family A G protein-coupled receptor-like"/>
    <property type="match status" value="1"/>
</dbReference>
<dbReference type="PROSITE" id="PS00237">
    <property type="entry name" value="G_PROTEIN_RECEP_F1_1"/>
    <property type="match status" value="1"/>
</dbReference>
<dbReference type="PROSITE" id="PS50262">
    <property type="entry name" value="G_PROTEIN_RECEP_F1_2"/>
    <property type="match status" value="1"/>
</dbReference>
<name>ADA1A_BOVIN</name>
<comment type="function">
    <text evidence="1">This alpha-adrenergic receptor mediates its action by association with G proteins that activate a phosphatidylinositol-calcium second messenger system. Its effect is mediated by G(q) and G(11) proteins. Nuclear ADRA1A-ADRA1B heterooligomers regulate phenylephrine (PE)-stimulated ERK signaling in cardiac myocytes (By similarity).</text>
</comment>
<comment type="subunit">
    <text evidence="2">Homo- and heterooligomer. Heterooligomerizes with ADRA1B homooligomers in cardiac myocytes. Interacts with CAVIN4.</text>
</comment>
<comment type="subcellular location">
    <subcellularLocation>
        <location>Nucleus membrane</location>
        <topology>Multi-pass membrane protein</topology>
    </subcellularLocation>
    <subcellularLocation>
        <location evidence="2">Cell membrane</location>
        <topology evidence="3">Multi-pass membrane protein</topology>
    </subcellularLocation>
    <subcellularLocation>
        <location evidence="2">Cytoplasm</location>
    </subcellularLocation>
    <subcellularLocation>
        <location evidence="2">Membrane</location>
        <location evidence="2">Caveola</location>
    </subcellularLocation>
    <text evidence="1">Location at the nuclear membrane facilitates heterooligomerization and regulates ERK-mediated signaling in cardiac myocytes. Colocalizes with GNAQ, PLCB1 as well as LAP2 at the nuclear membrane of cardiac myocytes (By similarity).</text>
</comment>
<comment type="similarity">
    <text evidence="4">Belongs to the G-protein coupled receptor 1 family. Adrenergic receptor subfamily. ADRA1A sub-subfamily.</text>
</comment>
<gene>
    <name type="primary">ADRA1A</name>
    <name type="synonym">ADRA1C</name>
</gene>
<proteinExistence type="evidence at transcript level"/>
<sequence length="466" mass="51466">MVFLSGNASDSSNCTHPPPPVNISKAILLGVILGGLILFGVLGNILVILSVACHRHLHSVTHYYIVNLAVADLLLTSTVLPFSAIFEILGYWAFGRVFCNVWAAVDVLCCTASIMGLCIISIDRYIGVSYPLRYPTIVTQKRGLMALLCVWALSLVISIGPLFGWRQPAPEDETICQINEEPGYVLFSALGSFYVPLTIILVMYCRVYVVAKRESRGLKSGLKTDKSDSEQVTLRIHRKNAQVGGSGVTSAKNKTHFSVRLLKFSREKKAAKTLGIVVGCFVLCWLPFFLVMPIGSFFPDFRPSETVFKIAFWLGYLNSCINPIIYPCSSQEFKKAFQNVLRIQCLRRKQSSKHTLGYTLHAPSHVLEGQHKDLVRIPVGSAETFYKISKTDGVCEWKIFSSLPRGSARMAVARDPSACTTARVRSKSFLQVCCCLGPSTPSHGENHQIPTIKIHTISLSENGEEV</sequence>